<gene>
    <name evidence="1" type="primary">ybjQ</name>
    <name type="ordered locus">UTI89_C0869</name>
</gene>
<reference key="1">
    <citation type="journal article" date="2006" name="Proc. Natl. Acad. Sci. U.S.A.">
        <title>Identification of genes subject to positive selection in uropathogenic strains of Escherichia coli: a comparative genomics approach.</title>
        <authorList>
            <person name="Chen S.L."/>
            <person name="Hung C.-S."/>
            <person name="Xu J."/>
            <person name="Reigstad C.S."/>
            <person name="Magrini V."/>
            <person name="Sabo A."/>
            <person name="Blasiar D."/>
            <person name="Bieri T."/>
            <person name="Meyer R.R."/>
            <person name="Ozersky P."/>
            <person name="Armstrong J.R."/>
            <person name="Fulton R.S."/>
            <person name="Latreille J.P."/>
            <person name="Spieth J."/>
            <person name="Hooton T.M."/>
            <person name="Mardis E.R."/>
            <person name="Hultgren S.J."/>
            <person name="Gordon J.I."/>
        </authorList>
    </citation>
    <scope>NUCLEOTIDE SEQUENCE [LARGE SCALE GENOMIC DNA]</scope>
    <source>
        <strain>UTI89 / UPEC</strain>
    </source>
</reference>
<name>YBJQ_ECOUT</name>
<evidence type="ECO:0000255" key="1">
    <source>
        <dbReference type="HAMAP-Rule" id="MF_00338"/>
    </source>
</evidence>
<organism>
    <name type="scientific">Escherichia coli (strain UTI89 / UPEC)</name>
    <dbReference type="NCBI Taxonomy" id="364106"/>
    <lineage>
        <taxon>Bacteria</taxon>
        <taxon>Pseudomonadati</taxon>
        <taxon>Pseudomonadota</taxon>
        <taxon>Gammaproteobacteria</taxon>
        <taxon>Enterobacterales</taxon>
        <taxon>Enterobacteriaceae</taxon>
        <taxon>Escherichia</taxon>
    </lineage>
</organism>
<feature type="chain" id="PRO_1000012995" description="UPF0145 protein YbjQ">
    <location>
        <begin position="1"/>
        <end position="107"/>
    </location>
</feature>
<accession>Q1RE59</accession>
<dbReference type="EMBL" id="CP000243">
    <property type="protein sequence ID" value="ABE06355.1"/>
    <property type="molecule type" value="Genomic_DNA"/>
</dbReference>
<dbReference type="RefSeq" id="WP_001160737.1">
    <property type="nucleotide sequence ID" value="NZ_CP064825.1"/>
</dbReference>
<dbReference type="SMR" id="Q1RE59"/>
<dbReference type="KEGG" id="eci:UTI89_C0869"/>
<dbReference type="HOGENOM" id="CLU_117144_3_0_6"/>
<dbReference type="Proteomes" id="UP000001952">
    <property type="component" value="Chromosome"/>
</dbReference>
<dbReference type="Gene3D" id="3.30.110.70">
    <property type="entry name" value="Hypothetical protein apc22750. Chain B"/>
    <property type="match status" value="1"/>
</dbReference>
<dbReference type="HAMAP" id="MF_00338">
    <property type="entry name" value="UPF0145"/>
    <property type="match status" value="1"/>
</dbReference>
<dbReference type="InterPro" id="IPR035439">
    <property type="entry name" value="UPF0145_dom_sf"/>
</dbReference>
<dbReference type="InterPro" id="IPR002765">
    <property type="entry name" value="UPF0145_YbjQ-like"/>
</dbReference>
<dbReference type="NCBIfam" id="NF002776">
    <property type="entry name" value="PRK02877.1"/>
    <property type="match status" value="1"/>
</dbReference>
<dbReference type="PANTHER" id="PTHR34068">
    <property type="entry name" value="UPF0145 PROTEIN YBJQ"/>
    <property type="match status" value="1"/>
</dbReference>
<dbReference type="PANTHER" id="PTHR34068:SF1">
    <property type="entry name" value="UPF0145 PROTEIN YBJQ"/>
    <property type="match status" value="1"/>
</dbReference>
<dbReference type="Pfam" id="PF01906">
    <property type="entry name" value="YbjQ_1"/>
    <property type="match status" value="1"/>
</dbReference>
<dbReference type="SUPFAM" id="SSF117782">
    <property type="entry name" value="YbjQ-like"/>
    <property type="match status" value="1"/>
</dbReference>
<comment type="similarity">
    <text evidence="1">Belongs to the UPF0145 family.</text>
</comment>
<proteinExistence type="inferred from homology"/>
<sequence length="107" mass="11437">MQFSTTPTLEGQTIVEYCGVVTGEAILGANIFRDFFAGIRDIVGGRSGAYEKELRKAREIAFEELGSQARALGADAVVGIDIDYETVGQNGSMLMVSVSGTAVKTRR</sequence>
<protein>
    <recommendedName>
        <fullName evidence="1">UPF0145 protein YbjQ</fullName>
    </recommendedName>
</protein>